<name>NFUA_SHEPA</name>
<proteinExistence type="inferred from homology"/>
<evidence type="ECO:0000255" key="1">
    <source>
        <dbReference type="HAMAP-Rule" id="MF_01637"/>
    </source>
</evidence>
<sequence length="192" mass="20759">MITISEAAQAHFVKLLSDQPEGTHIRVFVISPGTAQAECGVSYCPPDAVEADDTEIEFNGFNAMVDEKSAPFLEEATIDFVTDQLGSQLTLKAPNAKMRKVSDDASLSERIEYVIQSEINPQLASHGGNIMLVEITEDGIAVLQFGGGCNGCSMVDVTLKDGIEKQLLDMFPGELSGVKDVTEHQHGEHSYQ</sequence>
<comment type="function">
    <text evidence="1">Involved in iron-sulfur cluster biogenesis. Binds a 4Fe-4S cluster, can transfer this cluster to apoproteins, and thereby intervenes in the maturation of Fe/S proteins. Could also act as a scaffold/chaperone for damaged Fe/S proteins.</text>
</comment>
<comment type="cofactor">
    <cofactor evidence="1">
        <name>[4Fe-4S] cluster</name>
        <dbReference type="ChEBI" id="CHEBI:49883"/>
    </cofactor>
    <text evidence="1">Binds 1 [4Fe-4S] cluster per subunit. The cluster is presumably bound at the interface of two monomers.</text>
</comment>
<comment type="subunit">
    <text evidence="1">Homodimer.</text>
</comment>
<comment type="similarity">
    <text evidence="1">Belongs to the NfuA family.</text>
</comment>
<feature type="chain" id="PRO_1000088201" description="Fe/S biogenesis protein NfuA">
    <location>
        <begin position="1"/>
        <end position="192"/>
    </location>
</feature>
<feature type="binding site" evidence="1">
    <location>
        <position position="149"/>
    </location>
    <ligand>
        <name>[4Fe-4S] cluster</name>
        <dbReference type="ChEBI" id="CHEBI:49883"/>
    </ligand>
</feature>
<feature type="binding site" evidence="1">
    <location>
        <position position="152"/>
    </location>
    <ligand>
        <name>[4Fe-4S] cluster</name>
        <dbReference type="ChEBI" id="CHEBI:49883"/>
    </ligand>
</feature>
<gene>
    <name evidence="1" type="primary">nfuA</name>
    <name type="ordered locus">Spea_4010</name>
</gene>
<keyword id="KW-0004">4Fe-4S</keyword>
<keyword id="KW-0408">Iron</keyword>
<keyword id="KW-0411">Iron-sulfur</keyword>
<keyword id="KW-0479">Metal-binding</keyword>
<keyword id="KW-1185">Reference proteome</keyword>
<organism>
    <name type="scientific">Shewanella pealeana (strain ATCC 700345 / ANG-SQ1)</name>
    <dbReference type="NCBI Taxonomy" id="398579"/>
    <lineage>
        <taxon>Bacteria</taxon>
        <taxon>Pseudomonadati</taxon>
        <taxon>Pseudomonadota</taxon>
        <taxon>Gammaproteobacteria</taxon>
        <taxon>Alteromonadales</taxon>
        <taxon>Shewanellaceae</taxon>
        <taxon>Shewanella</taxon>
    </lineage>
</organism>
<protein>
    <recommendedName>
        <fullName evidence="1">Fe/S biogenesis protein NfuA</fullName>
    </recommendedName>
</protein>
<reference key="1">
    <citation type="submission" date="2007-10" db="EMBL/GenBank/DDBJ databases">
        <title>Complete sequence of Shewanella pealeana ATCC 700345.</title>
        <authorList>
            <consortium name="US DOE Joint Genome Institute"/>
            <person name="Copeland A."/>
            <person name="Lucas S."/>
            <person name="Lapidus A."/>
            <person name="Barry K."/>
            <person name="Glavina del Rio T."/>
            <person name="Dalin E."/>
            <person name="Tice H."/>
            <person name="Pitluck S."/>
            <person name="Chertkov O."/>
            <person name="Brettin T."/>
            <person name="Bruce D."/>
            <person name="Detter J.C."/>
            <person name="Han C."/>
            <person name="Schmutz J."/>
            <person name="Larimer F."/>
            <person name="Land M."/>
            <person name="Hauser L."/>
            <person name="Kyrpides N."/>
            <person name="Kim E."/>
            <person name="Zhao J.-S.Z."/>
            <person name="Manno D."/>
            <person name="Hawari J."/>
            <person name="Richardson P."/>
        </authorList>
    </citation>
    <scope>NUCLEOTIDE SEQUENCE [LARGE SCALE GENOMIC DNA]</scope>
    <source>
        <strain>ATCC 700345 / ANG-SQ1</strain>
    </source>
</reference>
<accession>A8H9T3</accession>
<dbReference type="EMBL" id="CP000851">
    <property type="protein sequence ID" value="ABV89320.1"/>
    <property type="molecule type" value="Genomic_DNA"/>
</dbReference>
<dbReference type="RefSeq" id="WP_012157200.1">
    <property type="nucleotide sequence ID" value="NC_009901.1"/>
</dbReference>
<dbReference type="SMR" id="A8H9T3"/>
<dbReference type="STRING" id="398579.Spea_4010"/>
<dbReference type="KEGG" id="spl:Spea_4010"/>
<dbReference type="eggNOG" id="COG0316">
    <property type="taxonomic scope" value="Bacteria"/>
</dbReference>
<dbReference type="eggNOG" id="COG0694">
    <property type="taxonomic scope" value="Bacteria"/>
</dbReference>
<dbReference type="HOGENOM" id="CLU_094569_0_0_6"/>
<dbReference type="OrthoDB" id="9785450at2"/>
<dbReference type="Proteomes" id="UP000002608">
    <property type="component" value="Chromosome"/>
</dbReference>
<dbReference type="GO" id="GO:0051539">
    <property type="term" value="F:4 iron, 4 sulfur cluster binding"/>
    <property type="evidence" value="ECO:0007669"/>
    <property type="project" value="UniProtKB-UniRule"/>
</dbReference>
<dbReference type="GO" id="GO:0005506">
    <property type="term" value="F:iron ion binding"/>
    <property type="evidence" value="ECO:0007669"/>
    <property type="project" value="InterPro"/>
</dbReference>
<dbReference type="GO" id="GO:0016226">
    <property type="term" value="P:iron-sulfur cluster assembly"/>
    <property type="evidence" value="ECO:0007669"/>
    <property type="project" value="UniProtKB-UniRule"/>
</dbReference>
<dbReference type="GO" id="GO:0051604">
    <property type="term" value="P:protein maturation"/>
    <property type="evidence" value="ECO:0007669"/>
    <property type="project" value="UniProtKB-UniRule"/>
</dbReference>
<dbReference type="Gene3D" id="3.30.300.130">
    <property type="entry name" value="Fe-S cluster assembly (FSCA)"/>
    <property type="match status" value="1"/>
</dbReference>
<dbReference type="Gene3D" id="2.60.300.12">
    <property type="entry name" value="HesB-like domain"/>
    <property type="match status" value="1"/>
</dbReference>
<dbReference type="HAMAP" id="MF_01637">
    <property type="entry name" value="Fe_S_biogen_NfuA"/>
    <property type="match status" value="1"/>
</dbReference>
<dbReference type="InterPro" id="IPR017726">
    <property type="entry name" value="Fe/S_biogenesis_protein_NfuA"/>
</dbReference>
<dbReference type="InterPro" id="IPR000361">
    <property type="entry name" value="FeS_biogenesis"/>
</dbReference>
<dbReference type="InterPro" id="IPR034904">
    <property type="entry name" value="FSCA_dom_sf"/>
</dbReference>
<dbReference type="InterPro" id="IPR035903">
    <property type="entry name" value="HesB-like_dom_sf"/>
</dbReference>
<dbReference type="InterPro" id="IPR001075">
    <property type="entry name" value="NIF_FeS_clus_asmbl_NifU_C"/>
</dbReference>
<dbReference type="NCBIfam" id="NF008392">
    <property type="entry name" value="PRK11190.1"/>
    <property type="match status" value="1"/>
</dbReference>
<dbReference type="NCBIfam" id="TIGR03341">
    <property type="entry name" value="YhgI_GntY"/>
    <property type="match status" value="1"/>
</dbReference>
<dbReference type="PANTHER" id="PTHR11178:SF51">
    <property type="entry name" value="FE_S BIOGENESIS PROTEIN NFUA"/>
    <property type="match status" value="1"/>
</dbReference>
<dbReference type="PANTHER" id="PTHR11178">
    <property type="entry name" value="IRON-SULFUR CLUSTER SCAFFOLD PROTEIN NFU-RELATED"/>
    <property type="match status" value="1"/>
</dbReference>
<dbReference type="Pfam" id="PF01521">
    <property type="entry name" value="Fe-S_biosyn"/>
    <property type="match status" value="1"/>
</dbReference>
<dbReference type="Pfam" id="PF01106">
    <property type="entry name" value="NifU"/>
    <property type="match status" value="1"/>
</dbReference>
<dbReference type="SUPFAM" id="SSF117916">
    <property type="entry name" value="Fe-S cluster assembly (FSCA) domain-like"/>
    <property type="match status" value="1"/>
</dbReference>
<dbReference type="SUPFAM" id="SSF89360">
    <property type="entry name" value="HesB-like domain"/>
    <property type="match status" value="1"/>
</dbReference>